<evidence type="ECO:0000250" key="1"/>
<evidence type="ECO:0000256" key="2">
    <source>
        <dbReference type="SAM" id="MobiDB-lite"/>
    </source>
</evidence>
<evidence type="ECO:0000269" key="3">
    <source>
    </source>
</evidence>
<evidence type="ECO:0000305" key="4"/>
<evidence type="ECO:0007829" key="5">
    <source>
        <dbReference type="PDB" id="6LVW"/>
    </source>
</evidence>
<proteinExistence type="evidence at protein level"/>
<sequence length="700" mass="78057">MRLGVCYFPEHWPSEEWERDVAAMADAGLEYVRMAEFSWGVLEPERGTFDFEWLDEAIELIGDHGMQAVLCTPTATPPKWLVDERPSIRQEDPDGTVREHGSRRHYCFNSDAYREETARIVERVTERYADSPHVAGWQTDNEFGCHETVRCYCDDCADAFRTWLADRYGDIDRLNEAWGNAFWSQQYGSFDEIDPPGPTPAEHHPSRLLAYARFSSDSVVEYNRLHADLIREADPDWFVTHNFMGRFPTLNAYDVSEDLDRVAWDSYPTGFVQDRYDGEASPDQLRAGDPDQVGMDHDIYRSALDRPFWVMEQQPGDVNWPPHCPQPGEGAMRLWAHHAAAHGADAVLYFRWRRCLEGQEQYHAGLRKADGSPDRGYADAAHTSEEFATLDGASHVDAPVAVVFDYDSLWALNAQPHAPDFDYWALQEAFYGAVRGRGVQVDVVPPSADLSGYAAVVAPALHLVTEDLADRLTDYIAGGGEVLFGPRTGVKDAENKLRPMSQPGPLTDLVGATVDQHESLPRRLETTVRRVGDPTDDSEEIAAPPVSFRTWAEWLDPDAAEPQYAYDVDGPADGRPAVVTNTVGDGQVTYCGVWPESDLADALASDLLDRAGVRYAERLPDGVRIGYRGGRTWVTNFTSDRLRLPEIDPESLAVDDTDRDGFDPMADDDKDSSADGIVVGPYGVAVIEGDCVDGLRIAQT</sequence>
<accession>B9LW38</accession>
<name>BGAL_HALLT</name>
<keyword id="KW-0002">3D-structure</keyword>
<keyword id="KW-0326">Glycosidase</keyword>
<keyword id="KW-0378">Hydrolase</keyword>
<keyword id="KW-0479">Metal-binding</keyword>
<keyword id="KW-1185">Reference proteome</keyword>
<keyword id="KW-0862">Zinc</keyword>
<organism>
    <name type="scientific">Halorubrum lacusprofundi (strain ATCC 49239 / DSM 5036 / JCM 8891 / ACAM 34)</name>
    <dbReference type="NCBI Taxonomy" id="416348"/>
    <lineage>
        <taxon>Archaea</taxon>
        <taxon>Methanobacteriati</taxon>
        <taxon>Methanobacteriota</taxon>
        <taxon>Stenosarchaea group</taxon>
        <taxon>Halobacteria</taxon>
        <taxon>Halobacteriales</taxon>
        <taxon>Haloferacaceae</taxon>
        <taxon>Halorubrum</taxon>
    </lineage>
</organism>
<feature type="chain" id="PRO_0000428831" description="Beta-galactosidase Bga">
    <location>
        <begin position="1"/>
        <end position="700"/>
    </location>
</feature>
<feature type="region of interest" description="Disordered" evidence="2">
    <location>
        <begin position="648"/>
        <end position="674"/>
    </location>
</feature>
<feature type="compositionally biased region" description="Acidic residues" evidence="2">
    <location>
        <begin position="648"/>
        <end position="658"/>
    </location>
</feature>
<feature type="active site" description="Proton donor" evidence="1">
    <location>
        <position position="142"/>
    </location>
</feature>
<feature type="active site" description="Nucleophile" evidence="1">
    <location>
        <position position="312"/>
    </location>
</feature>
<feature type="binding site" evidence="1">
    <location>
        <position position="103"/>
    </location>
    <ligand>
        <name>substrate</name>
    </ligand>
</feature>
<feature type="binding site" evidence="1">
    <location>
        <position position="107"/>
    </location>
    <ligand>
        <name>Zn(2+)</name>
        <dbReference type="ChEBI" id="CHEBI:29105"/>
    </ligand>
</feature>
<feature type="binding site" evidence="1">
    <location>
        <position position="141"/>
    </location>
    <ligand>
        <name>substrate</name>
    </ligand>
</feature>
<feature type="binding site" evidence="1">
    <location>
        <position position="151"/>
    </location>
    <ligand>
        <name>Zn(2+)</name>
        <dbReference type="ChEBI" id="CHEBI:29105"/>
    </ligand>
</feature>
<feature type="binding site" evidence="1">
    <location>
        <position position="153"/>
    </location>
    <ligand>
        <name>Zn(2+)</name>
        <dbReference type="ChEBI" id="CHEBI:29105"/>
    </ligand>
</feature>
<feature type="binding site" evidence="1">
    <location>
        <position position="156"/>
    </location>
    <ligand>
        <name>Zn(2+)</name>
        <dbReference type="ChEBI" id="CHEBI:29105"/>
    </ligand>
</feature>
<feature type="binding site" evidence="1">
    <location>
        <position position="320"/>
    </location>
    <ligand>
        <name>substrate</name>
    </ligand>
</feature>
<feature type="binding site" evidence="1">
    <location>
        <begin position="360"/>
        <end position="363"/>
    </location>
    <ligand>
        <name>substrate</name>
    </ligand>
</feature>
<feature type="strand" evidence="5">
    <location>
        <begin position="2"/>
        <end position="6"/>
    </location>
</feature>
<feature type="turn" evidence="5">
    <location>
        <begin position="9"/>
        <end position="11"/>
    </location>
</feature>
<feature type="helix" evidence="5">
    <location>
        <begin position="15"/>
        <end position="27"/>
    </location>
</feature>
<feature type="strand" evidence="5">
    <location>
        <begin position="29"/>
        <end position="34"/>
    </location>
</feature>
<feature type="helix" evidence="5">
    <location>
        <begin position="39"/>
        <end position="42"/>
    </location>
</feature>
<feature type="helix" evidence="5">
    <location>
        <begin position="52"/>
        <end position="63"/>
    </location>
</feature>
<feature type="strand" evidence="5">
    <location>
        <begin position="67"/>
        <end position="71"/>
    </location>
</feature>
<feature type="helix" evidence="5">
    <location>
        <begin position="73"/>
        <end position="75"/>
    </location>
</feature>
<feature type="helix" evidence="5">
    <location>
        <begin position="79"/>
        <end position="84"/>
    </location>
</feature>
<feature type="helix" evidence="5">
    <location>
        <begin position="86"/>
        <end position="88"/>
    </location>
</feature>
<feature type="strand" evidence="5">
    <location>
        <begin position="100"/>
        <end position="103"/>
    </location>
</feature>
<feature type="helix" evidence="5">
    <location>
        <begin position="111"/>
        <end position="126"/>
    </location>
</feature>
<feature type="strand" evidence="5">
    <location>
        <begin position="129"/>
        <end position="132"/>
    </location>
</feature>
<feature type="strand" evidence="5">
    <location>
        <begin position="134"/>
        <end position="138"/>
    </location>
</feature>
<feature type="strand" evidence="5">
    <location>
        <begin position="140"/>
        <end position="142"/>
    </location>
</feature>
<feature type="turn" evidence="5">
    <location>
        <begin position="143"/>
        <end position="147"/>
    </location>
</feature>
<feature type="helix" evidence="5">
    <location>
        <begin position="154"/>
        <end position="168"/>
    </location>
</feature>
<feature type="helix" evidence="5">
    <location>
        <begin position="171"/>
        <end position="178"/>
    </location>
</feature>
<feature type="helix" evidence="5">
    <location>
        <begin position="182"/>
        <end position="184"/>
    </location>
</feature>
<feature type="helix" evidence="5">
    <location>
        <begin position="190"/>
        <end position="192"/>
    </location>
</feature>
<feature type="helix" evidence="5">
    <location>
        <begin position="205"/>
        <end position="233"/>
    </location>
</feature>
<feature type="strand" evidence="5">
    <location>
        <begin position="239"/>
        <end position="243"/>
    </location>
</feature>
<feature type="helix" evidence="5">
    <location>
        <begin position="252"/>
        <end position="256"/>
    </location>
</feature>
<feature type="strand" evidence="5">
    <location>
        <begin position="260"/>
        <end position="266"/>
    </location>
</feature>
<feature type="helix" evidence="5">
    <location>
        <begin position="268"/>
        <end position="271"/>
    </location>
</feature>
<feature type="helix" evidence="5">
    <location>
        <begin position="282"/>
        <end position="287"/>
    </location>
</feature>
<feature type="helix" evidence="5">
    <location>
        <begin position="290"/>
        <end position="301"/>
    </location>
</feature>
<feature type="turn" evidence="5">
    <location>
        <begin position="302"/>
        <end position="305"/>
    </location>
</feature>
<feature type="strand" evidence="5">
    <location>
        <begin position="309"/>
        <end position="313"/>
    </location>
</feature>
<feature type="strand" evidence="5">
    <location>
        <begin position="319"/>
        <end position="322"/>
    </location>
</feature>
<feature type="helix" evidence="5">
    <location>
        <begin position="331"/>
        <end position="342"/>
    </location>
</feature>
<feature type="strand" evidence="5">
    <location>
        <begin position="345"/>
        <end position="350"/>
    </location>
</feature>
<feature type="strand" evidence="5">
    <location>
        <begin position="356"/>
        <end position="358"/>
    </location>
</feature>
<feature type="turn" evidence="5">
    <location>
        <begin position="359"/>
        <end position="362"/>
    </location>
</feature>
<feature type="strand" evidence="5">
    <location>
        <begin position="369"/>
        <end position="371"/>
    </location>
</feature>
<feature type="helix" evidence="5">
    <location>
        <begin position="375"/>
        <end position="389"/>
    </location>
</feature>
<feature type="strand" evidence="5">
    <location>
        <begin position="399"/>
        <end position="403"/>
    </location>
</feature>
<feature type="helix" evidence="5">
    <location>
        <begin position="406"/>
        <end position="414"/>
    </location>
</feature>
<feature type="helix" evidence="5">
    <location>
        <begin position="423"/>
        <end position="435"/>
    </location>
</feature>
<feature type="turn" evidence="5">
    <location>
        <begin position="436"/>
        <end position="438"/>
    </location>
</feature>
<feature type="strand" evidence="5">
    <location>
        <begin position="441"/>
        <end position="444"/>
    </location>
</feature>
<feature type="strand" evidence="5">
    <location>
        <begin position="454"/>
        <end position="459"/>
    </location>
</feature>
<feature type="helix" evidence="5">
    <location>
        <begin position="466"/>
        <end position="478"/>
    </location>
</feature>
<feature type="strand" evidence="5">
    <location>
        <begin position="481"/>
        <end position="484"/>
    </location>
</feature>
<feature type="strand" evidence="5">
    <location>
        <begin position="489"/>
        <end position="491"/>
    </location>
</feature>
<feature type="helix" evidence="5">
    <location>
        <begin position="504"/>
        <end position="506"/>
    </location>
</feature>
<feature type="strand" evidence="5">
    <location>
        <begin position="509"/>
        <end position="519"/>
    </location>
</feature>
<feature type="strand" evidence="5">
    <location>
        <begin position="527"/>
        <end position="530"/>
    </location>
</feature>
<feature type="strand" evidence="5">
    <location>
        <begin position="546"/>
        <end position="560"/>
    </location>
</feature>
<feature type="strand" evidence="5">
    <location>
        <begin position="564"/>
        <end position="566"/>
    </location>
</feature>
<feature type="turn" evidence="5">
    <location>
        <begin position="571"/>
        <end position="574"/>
    </location>
</feature>
<feature type="strand" evidence="5">
    <location>
        <begin position="578"/>
        <end position="582"/>
    </location>
</feature>
<feature type="strand" evidence="5">
    <location>
        <begin position="584"/>
        <end position="591"/>
    </location>
</feature>
<feature type="strand" evidence="5">
    <location>
        <begin position="593"/>
        <end position="595"/>
    </location>
</feature>
<feature type="helix" evidence="5">
    <location>
        <begin position="597"/>
        <end position="610"/>
    </location>
</feature>
<feature type="strand" evidence="5">
    <location>
        <begin position="623"/>
        <end position="628"/>
    </location>
</feature>
<feature type="strand" evidence="5">
    <location>
        <begin position="631"/>
        <end position="636"/>
    </location>
</feature>
<feature type="strand" evidence="5">
    <location>
        <begin position="642"/>
        <end position="644"/>
    </location>
</feature>
<feature type="strand" evidence="5">
    <location>
        <begin position="677"/>
        <end position="679"/>
    </location>
</feature>
<feature type="strand" evidence="5">
    <location>
        <begin position="687"/>
        <end position="689"/>
    </location>
</feature>
<dbReference type="EC" id="3.2.1.23"/>
<dbReference type="EMBL" id="CP001366">
    <property type="protein sequence ID" value="ACM58428.1"/>
    <property type="molecule type" value="Genomic_DNA"/>
</dbReference>
<dbReference type="RefSeq" id="WP_012659244.1">
    <property type="nucleotide sequence ID" value="NC_012028.1"/>
</dbReference>
<dbReference type="PDB" id="6LVW">
    <property type="method" value="X-ray"/>
    <property type="resolution" value="2.49 A"/>
    <property type="chains" value="A=1-700"/>
</dbReference>
<dbReference type="PDBsum" id="6LVW"/>
<dbReference type="SMR" id="B9LW38"/>
<dbReference type="CAZy" id="GH42">
    <property type="family name" value="Glycoside Hydrolase Family 42"/>
</dbReference>
<dbReference type="GeneID" id="7399104"/>
<dbReference type="KEGG" id="hla:Hlac_2868"/>
<dbReference type="eggNOG" id="arCOG04085">
    <property type="taxonomic scope" value="Archaea"/>
</dbReference>
<dbReference type="HOGENOM" id="CLU_012430_1_0_2"/>
<dbReference type="BRENDA" id="3.2.1.23">
    <property type="organism ID" value="11918"/>
</dbReference>
<dbReference type="Proteomes" id="UP000000740">
    <property type="component" value="Chromosome 2"/>
</dbReference>
<dbReference type="GO" id="GO:0009341">
    <property type="term" value="C:beta-galactosidase complex"/>
    <property type="evidence" value="ECO:0007669"/>
    <property type="project" value="InterPro"/>
</dbReference>
<dbReference type="GO" id="GO:0004565">
    <property type="term" value="F:beta-galactosidase activity"/>
    <property type="evidence" value="ECO:0007669"/>
    <property type="project" value="UniProtKB-EC"/>
</dbReference>
<dbReference type="GO" id="GO:0046872">
    <property type="term" value="F:metal ion binding"/>
    <property type="evidence" value="ECO:0007669"/>
    <property type="project" value="UniProtKB-KW"/>
</dbReference>
<dbReference type="GO" id="GO:0005975">
    <property type="term" value="P:carbohydrate metabolic process"/>
    <property type="evidence" value="ECO:0007669"/>
    <property type="project" value="InterPro"/>
</dbReference>
<dbReference type="CDD" id="cd03143">
    <property type="entry name" value="A4_beta-galactosidase_middle_domain"/>
    <property type="match status" value="1"/>
</dbReference>
<dbReference type="Gene3D" id="3.40.50.880">
    <property type="match status" value="1"/>
</dbReference>
<dbReference type="Gene3D" id="3.20.20.80">
    <property type="entry name" value="Glycosidases"/>
    <property type="match status" value="1"/>
</dbReference>
<dbReference type="InterPro" id="IPR013738">
    <property type="entry name" value="Beta_galactosidase_Trimer"/>
</dbReference>
<dbReference type="InterPro" id="IPR029062">
    <property type="entry name" value="Class_I_gatase-like"/>
</dbReference>
<dbReference type="InterPro" id="IPR003476">
    <property type="entry name" value="Glyco_hydro_42"/>
</dbReference>
<dbReference type="InterPro" id="IPR013529">
    <property type="entry name" value="Glyco_hydro_42_N"/>
</dbReference>
<dbReference type="InterPro" id="IPR017853">
    <property type="entry name" value="Glycoside_hydrolase_SF"/>
</dbReference>
<dbReference type="PANTHER" id="PTHR36447">
    <property type="entry name" value="BETA-GALACTOSIDASE GANA"/>
    <property type="match status" value="1"/>
</dbReference>
<dbReference type="PANTHER" id="PTHR36447:SF2">
    <property type="entry name" value="BETA-GALACTOSIDASE YESZ"/>
    <property type="match status" value="1"/>
</dbReference>
<dbReference type="Pfam" id="PF02449">
    <property type="entry name" value="Glyco_hydro_42"/>
    <property type="match status" value="1"/>
</dbReference>
<dbReference type="Pfam" id="PF08532">
    <property type="entry name" value="Glyco_hydro_42M"/>
    <property type="match status" value="1"/>
</dbReference>
<dbReference type="PIRSF" id="PIRSF001084">
    <property type="entry name" value="B-galactosidase"/>
    <property type="match status" value="1"/>
</dbReference>
<dbReference type="SUPFAM" id="SSF51445">
    <property type="entry name" value="(Trans)glycosidases"/>
    <property type="match status" value="1"/>
</dbReference>
<dbReference type="SUPFAM" id="SSF52317">
    <property type="entry name" value="Class I glutamine amidotransferase-like"/>
    <property type="match status" value="1"/>
</dbReference>
<comment type="function">
    <text evidence="3">Cleaves o-nitrophenyl-beta-D-galactopyranoside (ONPG) in vitro.</text>
</comment>
<comment type="catalytic activity">
    <reaction>
        <text>Hydrolysis of terminal non-reducing beta-D-galactose residues in beta-D-galactosides.</text>
        <dbReference type="EC" id="3.2.1.23"/>
    </reaction>
</comment>
<comment type="activity regulation">
    <text evidence="3">Requires 4 M NaCl or KCl for maximal activity.</text>
</comment>
<comment type="biophysicochemical properties">
    <phDependence>
        <text evidence="3">Optimum pH is 6.5 with ONPG as substrate. Measured at 37 degrees Celsius and in 4 M KCl.</text>
    </phDependence>
    <temperatureDependence>
        <text evidence="3">Optimum temperature is around 50-55 degrees Celsius in 4 M KCl and at pH 6.5. Partial activity (10-13% of maximum) at temperatures from 4-10 degrees Celsius.</text>
    </temperatureDependence>
</comment>
<comment type="similarity">
    <text evidence="4">Belongs to the glycosyl hydrolase 42 family.</text>
</comment>
<protein>
    <recommendedName>
        <fullName>Beta-galactosidase Bga</fullName>
        <shortName>Beta-gal</shortName>
        <ecNumber>3.2.1.23</ecNumber>
    </recommendedName>
</protein>
<reference key="1">
    <citation type="journal article" date="2016" name="Stand. Genomic Sci.">
        <title>Complete genome sequence of the Antarctic Halorubrum lacusprofundi type strain ACAM 34.</title>
        <authorList>
            <person name="Anderson I.J."/>
            <person name="DasSarma P."/>
            <person name="Lucas S."/>
            <person name="Copeland A."/>
            <person name="Lapidus A."/>
            <person name="Del Rio T.G."/>
            <person name="Tice H."/>
            <person name="Dalin E."/>
            <person name="Bruce D.C."/>
            <person name="Goodwin L."/>
            <person name="Pitluck S."/>
            <person name="Sims D."/>
            <person name="Brettin T.S."/>
            <person name="Detter J.C."/>
            <person name="Han C.S."/>
            <person name="Larimer F."/>
            <person name="Hauser L."/>
            <person name="Land M."/>
            <person name="Ivanova N."/>
            <person name="Richardson P."/>
            <person name="Cavicchioli R."/>
            <person name="DasSarma S."/>
            <person name="Woese C.R."/>
            <person name="Kyrpides N.C."/>
        </authorList>
    </citation>
    <scope>NUCLEOTIDE SEQUENCE [LARGE SCALE GENOMIC DNA]</scope>
    <source>
        <strain>ATCC 49239 / DSM 5036 / JCM 8891 / ACAM 34</strain>
    </source>
</reference>
<reference key="2">
    <citation type="journal article" date="2013" name="BMC Biotechnol.">
        <title>Cloning, overexpression, purification, and characterization of a polyextremophilic beta-galactosidase from the Antarctic haloarchaeon Halorubrum lacusprofundi.</title>
        <authorList>
            <person name="Karan R."/>
            <person name="Capes M.D."/>
            <person name="DasSarma P."/>
            <person name="DasSarma S."/>
        </authorList>
    </citation>
    <scope>FUNCTION</scope>
    <scope>IDENTIFICATION BY MASS SPECTROMETRY</scope>
    <scope>ACTIVITY REGULATION</scope>
    <scope>BIOPHYSICOCHEMICAL PROPERTIES</scope>
    <source>
        <strain>ATCC 49239 / DSM 5036 / JCM 8891 / ACAM 34</strain>
    </source>
</reference>
<gene>
    <name type="ordered locus">Hlac_2868</name>
</gene>